<reference key="1">
    <citation type="journal article" date="2011" name="Clin. Exp. Allergy">
        <title>Diagnostic value of Alt a 1, fungal enolase and manganese-dependent superoxide dismutase in the component-resolved diagnosis of allergy to pleosporaceae.</title>
        <authorList>
            <person name="Postigo I."/>
            <person name="Gutierrez-Rodriguez A."/>
            <person name="Fernandez J."/>
            <person name="Guisantes J.A."/>
            <person name="Sunen E."/>
            <person name="Martinez J."/>
        </authorList>
    </citation>
    <scope>PROTEIN SEQUENCE</scope>
    <scope>ALLERGEN</scope>
    <scope>IDENTIFICATION BY MASS SPECTROMETRY</scope>
    <source>
        <strain>CBS 104.26</strain>
    </source>
</reference>
<feature type="chain" id="PRO_0000392637" description="Superoxide dismutase [Mn], mitochondrial">
    <location>
        <begin position="1" status="less than"/>
        <end position="25" status="greater than"/>
    </location>
</feature>
<feature type="binding site" evidence="1">
    <location>
        <position position="9"/>
    </location>
    <ligand>
        <name>Mn(2+)</name>
        <dbReference type="ChEBI" id="CHEBI:29035"/>
    </ligand>
</feature>
<feature type="non-terminal residue">
    <location>
        <position position="1"/>
    </location>
</feature>
<feature type="non-terminal residue">
    <location>
        <position position="25"/>
    </location>
</feature>
<organism>
    <name type="scientific">Alternaria alternata</name>
    <name type="common">Alternaria rot fungus</name>
    <name type="synonym">Torula alternata</name>
    <dbReference type="NCBI Taxonomy" id="5599"/>
    <lineage>
        <taxon>Eukaryota</taxon>
        <taxon>Fungi</taxon>
        <taxon>Dikarya</taxon>
        <taxon>Ascomycota</taxon>
        <taxon>Pezizomycotina</taxon>
        <taxon>Dothideomycetes</taxon>
        <taxon>Pleosporomycetidae</taxon>
        <taxon>Pleosporales</taxon>
        <taxon>Pleosporineae</taxon>
        <taxon>Pleosporaceae</taxon>
        <taxon>Alternaria</taxon>
        <taxon>Alternaria sect. Alternaria</taxon>
        <taxon>Alternaria alternata complex</taxon>
    </lineage>
</organism>
<evidence type="ECO:0000250" key="1">
    <source>
        <dbReference type="UniProtKB" id="P04179"/>
    </source>
</evidence>
<evidence type="ECO:0000250" key="2">
    <source>
        <dbReference type="UniProtKB" id="P0A0J3"/>
    </source>
</evidence>
<evidence type="ECO:0000255" key="3"/>
<evidence type="ECO:0000269" key="4">
    <source>
    </source>
</evidence>
<keyword id="KW-0020">Allergen</keyword>
<keyword id="KW-0049">Antioxidant</keyword>
<keyword id="KW-0903">Direct protein sequencing</keyword>
<keyword id="KW-0464">Manganese</keyword>
<keyword id="KW-0479">Metal-binding</keyword>
<keyword id="KW-0496">Mitochondrion</keyword>
<keyword id="KW-0560">Oxidoreductase</keyword>
<sequence>FNAGGHINHSLFWQNLAPASSNEAK</sequence>
<comment type="function">
    <text evidence="1">Destroys superoxide anion radicals which are normally produced within the cells and which are toxic to biological systems.</text>
</comment>
<comment type="catalytic activity">
    <reaction evidence="2">
        <text>2 superoxide + 2 H(+) = H2O2 + O2</text>
        <dbReference type="Rhea" id="RHEA:20696"/>
        <dbReference type="ChEBI" id="CHEBI:15378"/>
        <dbReference type="ChEBI" id="CHEBI:15379"/>
        <dbReference type="ChEBI" id="CHEBI:16240"/>
        <dbReference type="ChEBI" id="CHEBI:18421"/>
        <dbReference type="EC" id="1.15.1.1"/>
    </reaction>
</comment>
<comment type="cofactor">
    <cofactor evidence="1">
        <name>Mn(2+)</name>
        <dbReference type="ChEBI" id="CHEBI:29035"/>
    </cofactor>
    <text evidence="1">Binds 1 Mn(2+) ion per subunit.</text>
</comment>
<comment type="subunit">
    <text evidence="1">Homotetramer.</text>
</comment>
<comment type="subcellular location">
    <subcellularLocation>
        <location evidence="1">Mitochondrion matrix</location>
    </subcellularLocation>
</comment>
<comment type="allergen">
    <text evidence="4">Causes an allergic reaction in humans. Binds to IgE.</text>
</comment>
<comment type="miscellaneous">
    <text>On the 2D-gel the determined pI of this protein is: 7, its MW is: 24 kDa.</text>
</comment>
<comment type="miscellaneous">
    <text>Could be used for the diagnosis of allergy to Pleosporaceae.</text>
</comment>
<comment type="similarity">
    <text evidence="3">Belongs to the iron/manganese superoxide dismutase family.</text>
</comment>
<proteinExistence type="evidence at protein level"/>
<dbReference type="EC" id="1.15.1.1" evidence="2"/>
<dbReference type="SMR" id="P86254"/>
<dbReference type="Allergome" id="11425">
    <property type="allergen name" value="Alt a 14.0101"/>
</dbReference>
<dbReference type="Allergome" id="8737">
    <property type="allergen name" value="Alt a 14"/>
</dbReference>
<dbReference type="GO" id="GO:0005759">
    <property type="term" value="C:mitochondrial matrix"/>
    <property type="evidence" value="ECO:0007669"/>
    <property type="project" value="UniProtKB-SubCell"/>
</dbReference>
<dbReference type="GO" id="GO:0046872">
    <property type="term" value="F:metal ion binding"/>
    <property type="evidence" value="ECO:0007669"/>
    <property type="project" value="UniProtKB-KW"/>
</dbReference>
<dbReference type="GO" id="GO:0004784">
    <property type="term" value="F:superoxide dismutase activity"/>
    <property type="evidence" value="ECO:0007669"/>
    <property type="project" value="UniProtKB-EC"/>
</dbReference>
<dbReference type="Gene3D" id="1.10.287.990">
    <property type="entry name" value="Fe,Mn superoxide dismutase (SOD) domain"/>
    <property type="match status" value="1"/>
</dbReference>
<dbReference type="InterPro" id="IPR036324">
    <property type="entry name" value="Mn/Fe_SOD_N_sf"/>
</dbReference>
<dbReference type="SUPFAM" id="SSF46609">
    <property type="entry name" value="Fe,Mn superoxide dismutase (SOD), N-terminal domain"/>
    <property type="match status" value="1"/>
</dbReference>
<name>SODM_ALTAL</name>
<protein>
    <recommendedName>
        <fullName evidence="1">Superoxide dismutase [Mn], mitochondrial</fullName>
        <ecNumber evidence="2">1.15.1.1</ecNumber>
    </recommendedName>
    <alternativeName>
        <fullName>Manganese-dependent superoxide dismutase</fullName>
        <shortName>MnSOD</shortName>
    </alternativeName>
    <allergenName>Alt a MnSOD</allergenName>
</protein>
<accession>P86254</accession>